<keyword id="KW-0963">Cytoplasm</keyword>
<keyword id="KW-1017">Isopeptide bond</keyword>
<keyword id="KW-0479">Metal-binding</keyword>
<keyword id="KW-0539">Nucleus</keyword>
<keyword id="KW-0687">Ribonucleoprotein</keyword>
<keyword id="KW-0689">Ribosomal protein</keyword>
<keyword id="KW-0832">Ubl conjugation</keyword>
<keyword id="KW-0862">Zinc</keyword>
<keyword id="KW-0863">Zinc-finger</keyword>
<feature type="chain" id="PRO_0000114816" description="Ubiquitin">
    <location>
        <begin position="1"/>
        <end position="76"/>
    </location>
</feature>
<feature type="chain" id="PRO_0000137673" description="Small ribosomal subunit protein eS31">
    <location>
        <begin position="77"/>
        <end position="156"/>
    </location>
</feature>
<feature type="domain" description="Ubiquitin-like" evidence="2">
    <location>
        <begin position="1"/>
        <end position="76"/>
    </location>
</feature>
<feature type="zinc finger region" description="C4-type">
    <location>
        <begin position="121"/>
        <end position="144"/>
    </location>
</feature>
<feature type="site" description="Interacts with activating enzyme">
    <location>
        <position position="54"/>
    </location>
</feature>
<feature type="site" description="Essential for function">
    <location>
        <position position="68"/>
    </location>
</feature>
<feature type="site" description="Interacts with activating enzyme">
    <location>
        <position position="72"/>
    </location>
</feature>
<feature type="cross-link" description="Glycyl lysine isopeptide (Lys-Gly) (interchain with G-Cter in ubiquitin)" evidence="1">
    <location>
        <position position="48"/>
    </location>
</feature>
<feature type="cross-link" description="Glycyl lysine isopeptide (Gly-Lys) (interchain with K-? in acceptor proteins)" evidence="2">
    <location>
        <position position="76"/>
    </location>
</feature>
<feature type="sequence conflict" description="In Ref. 1; AAA29989." evidence="3" ref="1">
    <original>E</original>
    <variation>G</variation>
    <location>
        <position position="51"/>
    </location>
</feature>
<feature type="sequence conflict" description="In Ref. 1; AAA29989." evidence="3" ref="1">
    <original>L</original>
    <variation>F</variation>
    <location>
        <position position="71"/>
    </location>
</feature>
<comment type="function">
    <molecule>Ubiquitin</molecule>
    <text evidence="1">Exists either covalently attached to another protein, or free (unanchored). When covalently bound, it is conjugated to target proteins via an isopeptide bond either as a monomer (monoubiquitin), a polymer linked via different Lys residues of the ubiquitin (polyubiquitin chains) or a linear polymer linked via the initiator Met of the ubiquitin (linear polyubiquitin chains). Polyubiquitin chains, when attached to a target protein, have different functions depending on the Lys residue of the ubiquitin that is linked: Lys-48-linked is involved in protein degradation via the proteasome. Linear polymer chains formed via attachment by the initiator Met lead to cell signaling. Ubiquitin is usually conjugated to Lys residues of target proteins, however, in rare cases, conjugation to Cys or Ser residues has been observed. When polyubiquitin is free (unanchored-polyubiquitin), it also has distinct roles, such as in activation of protein kinases, and in signaling (By similarity).</text>
</comment>
<comment type="function">
    <molecule>Small ribosomal subunit protein eS31</molecule>
    <text>Component of the 40S subunit of the ribosome.</text>
</comment>
<comment type="subunit">
    <molecule>Small ribosomal subunit protein eS31</molecule>
    <text evidence="1">Part of the 40S ribosomal subunit.</text>
</comment>
<comment type="subcellular location">
    <molecule>Ubiquitin</molecule>
    <subcellularLocation>
        <location evidence="1">Cytoplasm</location>
    </subcellularLocation>
    <subcellularLocation>
        <location evidence="1">Nucleus</location>
    </subcellularLocation>
</comment>
<comment type="miscellaneous">
    <text>Ubiquitin is synthesized as a polyubiquitin precursor with exact head to tail repeats, the number of repeats differs between species. In some species there is a final amino-acid after the last repeat. Some ubiquitin genes contain a single copy of ubiquitin fused to a ribosomal protein (either eL40 or eS31).</text>
</comment>
<comment type="similarity">
    <text evidence="3">In the N-terminal section; belongs to the ubiquitin family.</text>
</comment>
<comment type="similarity">
    <text evidence="3">In the C-terminal section; belongs to the eukaryotic ribosomal protein eS31 family.</text>
</comment>
<organism>
    <name type="scientific">Spodoptera frugiperda</name>
    <name type="common">Fall armyworm</name>
    <dbReference type="NCBI Taxonomy" id="7108"/>
    <lineage>
        <taxon>Eukaryota</taxon>
        <taxon>Metazoa</taxon>
        <taxon>Ecdysozoa</taxon>
        <taxon>Arthropoda</taxon>
        <taxon>Hexapoda</taxon>
        <taxon>Insecta</taxon>
        <taxon>Pterygota</taxon>
        <taxon>Neoptera</taxon>
        <taxon>Endopterygota</taxon>
        <taxon>Lepidoptera</taxon>
        <taxon>Glossata</taxon>
        <taxon>Ditrysia</taxon>
        <taxon>Noctuoidea</taxon>
        <taxon>Noctuidae</taxon>
        <taxon>Amphipyrinae</taxon>
        <taxon>Spodoptera</taxon>
    </lineage>
</organism>
<name>RS27A_SPOFR</name>
<protein>
    <recommendedName>
        <fullName evidence="3">Ubiquitin-ribosomal protein eS31 fusion protein</fullName>
    </recommendedName>
    <component>
        <recommendedName>
            <fullName>Ubiquitin</fullName>
        </recommendedName>
    </component>
    <component>
        <recommendedName>
            <fullName evidence="3">Small ribosomal subunit protein eS31</fullName>
        </recommendedName>
        <alternativeName>
            <fullName>40S ribosomal protein S27a</fullName>
        </alternativeName>
    </component>
</protein>
<sequence>MQIFVKTLTGKTITLEVEPSDTIENVKAKIQDKEGIPPDQQRLIFAGKQLEDGRTLSDYNIQKESTLHLVLRLRGGAKKRKKKNYSTPKKIKHKKKKVKLAVLRFYKVDENGKIHRLRRECTGEQCGAGVFMAVMEDRHYCGKCHSTMVFKDDDRP</sequence>
<proteinExistence type="evidence at transcript level"/>
<reference key="1">
    <citation type="journal article" date="1990" name="Proc. Natl. Acad. Sci. U.S.A.">
        <title>Identification of a viral gene encoding a ubiquitin-like protein.</title>
        <authorList>
            <person name="Guarino L.A."/>
        </authorList>
    </citation>
    <scope>NUCLEOTIDE SEQUENCE [GENOMIC DNA] OF 1-76</scope>
</reference>
<reference key="2">
    <citation type="journal article" date="2003" name="Bioinformatics">
        <title>Annotation pattern of ESTs from Spodoptera frugiperda Sf9 cells and analysis of the ribosomal protein genes reveal insect-specific features and unexpectedly low codon usage bias.</title>
        <authorList>
            <person name="Landais I."/>
            <person name="Ogliastro M."/>
            <person name="Mita K."/>
            <person name="Nohata J."/>
            <person name="Lopez-Ferber M."/>
            <person name="Duonor-Cerutti M."/>
            <person name="Shimada T."/>
            <person name="Fournier P."/>
            <person name="Devauchelle G."/>
        </authorList>
    </citation>
    <scope>NUCLEOTIDE SEQUENCE [LARGE SCALE MRNA]</scope>
</reference>
<accession>P68203</accession>
<accession>P68195</accession>
<accession>Q8WQI4</accession>
<accession>Q9VKW6</accession>
<accession>Q9VQX7</accession>
<accession>Q9VZL4</accession>
<dbReference type="EMBL" id="M30306">
    <property type="protein sequence ID" value="AAA29989.1"/>
    <property type="molecule type" value="Genomic_DNA"/>
</dbReference>
<dbReference type="EMBL" id="AY072292">
    <property type="protein sequence ID" value="AAL62473.1"/>
    <property type="molecule type" value="mRNA"/>
</dbReference>
<dbReference type="PIR" id="B34813">
    <property type="entry name" value="UQUYSF"/>
</dbReference>
<dbReference type="RefSeq" id="XP_035450618.1">
    <property type="nucleotide sequence ID" value="XM_035594725.2"/>
</dbReference>
<dbReference type="SMR" id="P68203"/>
<dbReference type="EnsemblMetazoa" id="XM_035594725.2">
    <property type="protein sequence ID" value="XP_035450618.1"/>
    <property type="gene ID" value="LOC118276424"/>
</dbReference>
<dbReference type="GeneID" id="118276424"/>
<dbReference type="Proteomes" id="UP000829999">
    <property type="component" value="Chromosome 31"/>
</dbReference>
<dbReference type="GO" id="GO:0005737">
    <property type="term" value="C:cytoplasm"/>
    <property type="evidence" value="ECO:0007669"/>
    <property type="project" value="UniProtKB-SubCell"/>
</dbReference>
<dbReference type="GO" id="GO:0005634">
    <property type="term" value="C:nucleus"/>
    <property type="evidence" value="ECO:0007669"/>
    <property type="project" value="UniProtKB-SubCell"/>
</dbReference>
<dbReference type="GO" id="GO:1990904">
    <property type="term" value="C:ribonucleoprotein complex"/>
    <property type="evidence" value="ECO:0007669"/>
    <property type="project" value="UniProtKB-KW"/>
</dbReference>
<dbReference type="GO" id="GO:0005840">
    <property type="term" value="C:ribosome"/>
    <property type="evidence" value="ECO:0007669"/>
    <property type="project" value="UniProtKB-KW"/>
</dbReference>
<dbReference type="GO" id="GO:0003735">
    <property type="term" value="F:structural constituent of ribosome"/>
    <property type="evidence" value="ECO:0007669"/>
    <property type="project" value="InterPro"/>
</dbReference>
<dbReference type="GO" id="GO:0008270">
    <property type="term" value="F:zinc ion binding"/>
    <property type="evidence" value="ECO:0007669"/>
    <property type="project" value="UniProtKB-KW"/>
</dbReference>
<dbReference type="GO" id="GO:0006412">
    <property type="term" value="P:translation"/>
    <property type="evidence" value="ECO:0007669"/>
    <property type="project" value="InterPro"/>
</dbReference>
<dbReference type="CDD" id="cd01803">
    <property type="entry name" value="Ubl_ubiquitin"/>
    <property type="match status" value="1"/>
</dbReference>
<dbReference type="FunFam" id="3.10.20.90:FF:000008">
    <property type="entry name" value="Ubiquitin-40S ribosomal protein S27a"/>
    <property type="match status" value="1"/>
</dbReference>
<dbReference type="Gene3D" id="6.20.50.150">
    <property type="match status" value="1"/>
</dbReference>
<dbReference type="Gene3D" id="3.10.20.90">
    <property type="entry name" value="Phosphatidylinositol 3-kinase Catalytic Subunit, Chain A, domain 1"/>
    <property type="match status" value="1"/>
</dbReference>
<dbReference type="InterPro" id="IPR002906">
    <property type="entry name" value="Ribosomal_eS31"/>
</dbReference>
<dbReference type="InterPro" id="IPR038582">
    <property type="entry name" value="Ribosomal_eS31_euk-type_sf"/>
</dbReference>
<dbReference type="InterPro" id="IPR011332">
    <property type="entry name" value="Ribosomal_zn-bd"/>
</dbReference>
<dbReference type="InterPro" id="IPR000626">
    <property type="entry name" value="Ubiquitin-like_dom"/>
</dbReference>
<dbReference type="InterPro" id="IPR029071">
    <property type="entry name" value="Ubiquitin-like_domsf"/>
</dbReference>
<dbReference type="InterPro" id="IPR019954">
    <property type="entry name" value="Ubiquitin_CS"/>
</dbReference>
<dbReference type="InterPro" id="IPR019956">
    <property type="entry name" value="Ubiquitin_dom"/>
</dbReference>
<dbReference type="InterPro" id="IPR050158">
    <property type="entry name" value="Ubiquitin_ubiquitin-like"/>
</dbReference>
<dbReference type="PANTHER" id="PTHR10666">
    <property type="entry name" value="UBIQUITIN"/>
    <property type="match status" value="1"/>
</dbReference>
<dbReference type="Pfam" id="PF01599">
    <property type="entry name" value="Ribosomal_S27"/>
    <property type="match status" value="1"/>
</dbReference>
<dbReference type="Pfam" id="PF00240">
    <property type="entry name" value="ubiquitin"/>
    <property type="match status" value="1"/>
</dbReference>
<dbReference type="PRINTS" id="PR00348">
    <property type="entry name" value="UBIQUITIN"/>
</dbReference>
<dbReference type="SMART" id="SM01402">
    <property type="entry name" value="Ribosomal_S27"/>
    <property type="match status" value="1"/>
</dbReference>
<dbReference type="SMART" id="SM00213">
    <property type="entry name" value="UBQ"/>
    <property type="match status" value="1"/>
</dbReference>
<dbReference type="SUPFAM" id="SSF54236">
    <property type="entry name" value="Ubiquitin-like"/>
    <property type="match status" value="1"/>
</dbReference>
<dbReference type="SUPFAM" id="SSF57829">
    <property type="entry name" value="Zn-binding ribosomal proteins"/>
    <property type="match status" value="1"/>
</dbReference>
<dbReference type="PROSITE" id="PS00299">
    <property type="entry name" value="UBIQUITIN_1"/>
    <property type="match status" value="1"/>
</dbReference>
<dbReference type="PROSITE" id="PS50053">
    <property type="entry name" value="UBIQUITIN_2"/>
    <property type="match status" value="1"/>
</dbReference>
<evidence type="ECO:0000250" key="1"/>
<evidence type="ECO:0000255" key="2">
    <source>
        <dbReference type="PROSITE-ProRule" id="PRU00214"/>
    </source>
</evidence>
<evidence type="ECO:0000305" key="3"/>